<comment type="subcellular location">
    <subcellularLocation>
        <location>Secreted</location>
        <location>Extracellular space</location>
        <location>Extracellular matrix</location>
    </subcellularLocation>
</comment>
<comment type="tissue specificity">
    <text>Expressed in many types of neurons in the brain.</text>
</comment>
<comment type="developmental stage">
    <text>Expressed throughout postnatal development of the brain and present at high levels in the adult.</text>
</comment>
<comment type="similarity">
    <text evidence="6">Belongs to the SPARC family.</text>
</comment>
<dbReference type="EMBL" id="U27562">
    <property type="protein sequence ID" value="AAA68708.1"/>
    <property type="molecule type" value="mRNA"/>
</dbReference>
<dbReference type="PIR" id="I58173">
    <property type="entry name" value="GERTX1"/>
</dbReference>
<dbReference type="RefSeq" id="NP_037078.1">
    <property type="nucleotide sequence ID" value="NM_012946.1"/>
</dbReference>
<dbReference type="SMR" id="P24054"/>
<dbReference type="FunCoup" id="P24054">
    <property type="interactions" value="136"/>
</dbReference>
<dbReference type="STRING" id="10116.ENSRNOP00000020357"/>
<dbReference type="GlyCosmos" id="P24054">
    <property type="glycosylation" value="3 sites, No reported glycans"/>
</dbReference>
<dbReference type="GlyGen" id="P24054">
    <property type="glycosylation" value="3 sites"/>
</dbReference>
<dbReference type="iPTMnet" id="P24054"/>
<dbReference type="PhosphoSitePlus" id="P24054"/>
<dbReference type="PaxDb" id="10116-ENSRNOP00000020357"/>
<dbReference type="GeneID" id="25434"/>
<dbReference type="KEGG" id="rno:25434"/>
<dbReference type="AGR" id="RGD:2531"/>
<dbReference type="CTD" id="8404"/>
<dbReference type="RGD" id="2531">
    <property type="gene designation" value="Sparcl1"/>
</dbReference>
<dbReference type="eggNOG" id="KOG4004">
    <property type="taxonomic scope" value="Eukaryota"/>
</dbReference>
<dbReference type="InParanoid" id="P24054"/>
<dbReference type="PhylomeDB" id="P24054"/>
<dbReference type="Reactome" id="R-RNO-381426">
    <property type="pathway name" value="Regulation of Insulin-like Growth Factor (IGF) transport and uptake by Insulin-like Growth Factor Binding Proteins (IGFBPs)"/>
</dbReference>
<dbReference type="Reactome" id="R-RNO-8957275">
    <property type="pathway name" value="Post-translational protein phosphorylation"/>
</dbReference>
<dbReference type="PRO" id="PR:P24054"/>
<dbReference type="Proteomes" id="UP000002494">
    <property type="component" value="Unplaced"/>
</dbReference>
<dbReference type="GO" id="GO:0098965">
    <property type="term" value="C:extracellular matrix of synaptic cleft"/>
    <property type="evidence" value="ECO:0000314"/>
    <property type="project" value="SynGO"/>
</dbReference>
<dbReference type="GO" id="GO:0005615">
    <property type="term" value="C:extracellular space"/>
    <property type="evidence" value="ECO:0000318"/>
    <property type="project" value="GO_Central"/>
</dbReference>
<dbReference type="GO" id="GO:0098978">
    <property type="term" value="C:glutamatergic synapse"/>
    <property type="evidence" value="ECO:0000314"/>
    <property type="project" value="SynGO"/>
</dbReference>
<dbReference type="GO" id="GO:0005509">
    <property type="term" value="F:calcium ion binding"/>
    <property type="evidence" value="ECO:0000318"/>
    <property type="project" value="GO_Central"/>
</dbReference>
<dbReference type="GO" id="GO:0005518">
    <property type="term" value="F:collagen binding"/>
    <property type="evidence" value="ECO:0000318"/>
    <property type="project" value="GO_Central"/>
</dbReference>
<dbReference type="GO" id="GO:0050840">
    <property type="term" value="F:extracellular matrix binding"/>
    <property type="evidence" value="ECO:0000318"/>
    <property type="project" value="GO_Central"/>
</dbReference>
<dbReference type="GO" id="GO:0050807">
    <property type="term" value="P:regulation of synapse organization"/>
    <property type="evidence" value="ECO:0000314"/>
    <property type="project" value="SynGO"/>
</dbReference>
<dbReference type="GO" id="GO:0007165">
    <property type="term" value="P:signal transduction"/>
    <property type="evidence" value="ECO:0007669"/>
    <property type="project" value="InterPro"/>
</dbReference>
<dbReference type="GO" id="GO:0099560">
    <property type="term" value="P:synaptic membrane adhesion"/>
    <property type="evidence" value="ECO:0000266"/>
    <property type="project" value="RGD"/>
</dbReference>
<dbReference type="CDD" id="cd16236">
    <property type="entry name" value="EFh_SPARC_SPARCL1"/>
    <property type="match status" value="1"/>
</dbReference>
<dbReference type="FunFam" id="1.10.238.10:FF:000068">
    <property type="entry name" value="SPARC isoform 1"/>
    <property type="match status" value="1"/>
</dbReference>
<dbReference type="FunFam" id="3.30.60.30:FF:000004">
    <property type="entry name" value="SPARC isoform 1"/>
    <property type="match status" value="1"/>
</dbReference>
<dbReference type="Gene3D" id="3.30.60.30">
    <property type="match status" value="1"/>
</dbReference>
<dbReference type="Gene3D" id="1.10.238.10">
    <property type="entry name" value="EF-hand"/>
    <property type="match status" value="1"/>
</dbReference>
<dbReference type="InterPro" id="IPR011992">
    <property type="entry name" value="EF-hand-dom_pair"/>
</dbReference>
<dbReference type="InterPro" id="IPR018247">
    <property type="entry name" value="EF_Hand_1_Ca_BS"/>
</dbReference>
<dbReference type="InterPro" id="IPR002048">
    <property type="entry name" value="EF_hand_dom"/>
</dbReference>
<dbReference type="InterPro" id="IPR003645">
    <property type="entry name" value="Fol_N"/>
</dbReference>
<dbReference type="InterPro" id="IPR015369">
    <property type="entry name" value="Follistatin/Osteonectin_EGF"/>
</dbReference>
<dbReference type="InterPro" id="IPR002350">
    <property type="entry name" value="Kazal_dom"/>
</dbReference>
<dbReference type="InterPro" id="IPR036058">
    <property type="entry name" value="Kazal_dom_sf"/>
</dbReference>
<dbReference type="InterPro" id="IPR001999">
    <property type="entry name" value="Osteonectin_CS"/>
</dbReference>
<dbReference type="InterPro" id="IPR016359">
    <property type="entry name" value="SPARC-like_p1"/>
</dbReference>
<dbReference type="InterPro" id="IPR019577">
    <property type="entry name" value="SPARC/Testican_Ca-bd-dom"/>
</dbReference>
<dbReference type="PANTHER" id="PTHR13866">
    <property type="entry name" value="SPARC OSTEONECTIN"/>
    <property type="match status" value="1"/>
</dbReference>
<dbReference type="PANTHER" id="PTHR13866:SF16">
    <property type="entry name" value="SPARC-LIKE PROTEIN 1"/>
    <property type="match status" value="1"/>
</dbReference>
<dbReference type="Pfam" id="PF09289">
    <property type="entry name" value="FOLN"/>
    <property type="match status" value="1"/>
</dbReference>
<dbReference type="Pfam" id="PF00050">
    <property type="entry name" value="Kazal_1"/>
    <property type="match status" value="1"/>
</dbReference>
<dbReference type="Pfam" id="PF10591">
    <property type="entry name" value="SPARC_Ca_bdg"/>
    <property type="match status" value="1"/>
</dbReference>
<dbReference type="PIRSF" id="PIRSF002574">
    <property type="entry name" value="SPARC-like_p1"/>
    <property type="match status" value="1"/>
</dbReference>
<dbReference type="SMART" id="SM00274">
    <property type="entry name" value="FOLN"/>
    <property type="match status" value="1"/>
</dbReference>
<dbReference type="SMART" id="SM00280">
    <property type="entry name" value="KAZAL"/>
    <property type="match status" value="1"/>
</dbReference>
<dbReference type="SUPFAM" id="SSF47473">
    <property type="entry name" value="EF-hand"/>
    <property type="match status" value="1"/>
</dbReference>
<dbReference type="SUPFAM" id="SSF57196">
    <property type="entry name" value="EGF/Laminin"/>
    <property type="match status" value="1"/>
</dbReference>
<dbReference type="SUPFAM" id="SSF100895">
    <property type="entry name" value="Kazal-type serine protease inhibitors"/>
    <property type="match status" value="1"/>
</dbReference>
<dbReference type="PROSITE" id="PS00018">
    <property type="entry name" value="EF_HAND_1"/>
    <property type="match status" value="1"/>
</dbReference>
<dbReference type="PROSITE" id="PS50222">
    <property type="entry name" value="EF_HAND_2"/>
    <property type="match status" value="1"/>
</dbReference>
<dbReference type="PROSITE" id="PS51465">
    <property type="entry name" value="KAZAL_2"/>
    <property type="match status" value="1"/>
</dbReference>
<dbReference type="PROSITE" id="PS00612">
    <property type="entry name" value="OSTEONECTIN_1"/>
    <property type="match status" value="1"/>
</dbReference>
<dbReference type="PROSITE" id="PS00613">
    <property type="entry name" value="OSTEONECTIN_2"/>
    <property type="match status" value="1"/>
</dbReference>
<gene>
    <name type="primary">Sparcl1</name>
    <name type="synonym">Sc1</name>
</gene>
<evidence type="ECO:0000250" key="1">
    <source>
        <dbReference type="UniProtKB" id="P70663"/>
    </source>
</evidence>
<evidence type="ECO:0000255" key="2"/>
<evidence type="ECO:0000255" key="3">
    <source>
        <dbReference type="PROSITE-ProRule" id="PRU00448"/>
    </source>
</evidence>
<evidence type="ECO:0000255" key="4">
    <source>
        <dbReference type="PROSITE-ProRule" id="PRU00798"/>
    </source>
</evidence>
<evidence type="ECO:0000256" key="5">
    <source>
        <dbReference type="SAM" id="MobiDB-lite"/>
    </source>
</evidence>
<evidence type="ECO:0000305" key="6"/>
<evidence type="ECO:0007744" key="7">
    <source>
    </source>
</evidence>
<organism>
    <name type="scientific">Rattus norvegicus</name>
    <name type="common">Rat</name>
    <dbReference type="NCBI Taxonomy" id="10116"/>
    <lineage>
        <taxon>Eukaryota</taxon>
        <taxon>Metazoa</taxon>
        <taxon>Chordata</taxon>
        <taxon>Craniata</taxon>
        <taxon>Vertebrata</taxon>
        <taxon>Euteleostomi</taxon>
        <taxon>Mammalia</taxon>
        <taxon>Eutheria</taxon>
        <taxon>Euarchontoglires</taxon>
        <taxon>Glires</taxon>
        <taxon>Rodentia</taxon>
        <taxon>Myomorpha</taxon>
        <taxon>Muroidea</taxon>
        <taxon>Muridae</taxon>
        <taxon>Murinae</taxon>
        <taxon>Rattus</taxon>
    </lineage>
</organism>
<protein>
    <recommendedName>
        <fullName>SPARC-like protein 1</fullName>
    </recommendedName>
    <alternativeName>
        <fullName>Matrix glycoprotein Sc1</fullName>
    </alternativeName>
</protein>
<name>SPRL1_RAT</name>
<keyword id="KW-0106">Calcium</keyword>
<keyword id="KW-1015">Disulfide bond</keyword>
<keyword id="KW-0272">Extracellular matrix</keyword>
<keyword id="KW-0325">Glycoprotein</keyword>
<keyword id="KW-0479">Metal-binding</keyword>
<keyword id="KW-0597">Phosphoprotein</keyword>
<keyword id="KW-1185">Reference proteome</keyword>
<keyword id="KW-0964">Secreted</keyword>
<keyword id="KW-0732">Signal</keyword>
<reference key="1">
    <citation type="journal article" date="1990" name="Neuron">
        <title>Molecular cloning of SC1: a putative brain extracellular matrix glycoprotein showing partial similarity to osteonectin/BM40/SPARC.</title>
        <authorList>
            <person name="Johnston I.G."/>
            <person name="Paladino T."/>
            <person name="Gurd J.W."/>
            <person name="Brown I.R."/>
        </authorList>
    </citation>
    <scope>NUCLEOTIDE SEQUENCE [MRNA]</scope>
    <source>
        <tissue>Brain</tissue>
    </source>
</reference>
<reference key="2">
    <citation type="journal article" date="2012" name="Nat. Commun.">
        <title>Quantitative maps of protein phosphorylation sites across 14 different rat organs and tissues.</title>
        <authorList>
            <person name="Lundby A."/>
            <person name="Secher A."/>
            <person name="Lage K."/>
            <person name="Nordsborg N.B."/>
            <person name="Dmytriyev A."/>
            <person name="Lundby C."/>
            <person name="Olsen J.V."/>
        </authorList>
    </citation>
    <scope>PHOSPHORYLATION [LARGE SCALE ANALYSIS] AT SER-68; SER-76; SER-84; SER-151; SER-159; SER-259; SER-333; SER-340 AND SER-370</scope>
    <scope>IDENTIFICATION BY MASS SPECTROMETRY [LARGE SCALE ANALYSIS]</scope>
</reference>
<sequence length="634" mass="70634">MKAVLLLLYALGIAAAVPTTFLSDHSNPTSATLPTLEDATVPTVPAEAAADIEKHPNHKAEKPSALNSEEEAHEQSTEQDKTYSFEVDLKDEEDGDGDLSVDPTERTLDLQEGTSEPQQKRLPENADFPATVSTPFVDSDQPANITKGEESQEQPVSDSHQQQDESGKQTQDSMTEESHKQDPGIPNEEKEEEEDPEDVGAPSDNQEEEKEPPEEQPTSKWEGNGDQSEDILQESSQPTQISKTKNDFEQGSQGQEGDSNAEGEDKAAGSKEHLPHTEWQGQEGRAGLDAIGNRKDTDEEKAVSTEPTDAAVVPRNHGASDNGGGDDSKHGASDDYFIPSQEFLEAERMHSLSYYLKYGEETPDESENRSEAGDNQGAKKAESSPNAEPSDEGNSRGHSADSCMNFQCKRGHTCKTDQHGKPHCVCQDPETCPPAKILDQACGTDNQTYASSCHLFATKCMLEGTKKGHQLQLDYFGACKSIPACTDFEVAQFPLRMRDWLKNILMQLYEPNPKHGGYLNEKQRSKVKKIYLDEKRLLAGDHPIELLLRDFKKNYHMYVYPVHWQFNELDQHPADRILTHSELAPLRASLVPMEHCITRFFEECDPNKDKHITLKEWGHCFGIKEEDIDENLLF</sequence>
<proteinExistence type="evidence at protein level"/>
<accession>P24054</accession>
<feature type="signal peptide" evidence="2">
    <location>
        <begin position="1"/>
        <end position="16"/>
    </location>
</feature>
<feature type="chain" id="PRO_0000020314" description="SPARC-like protein 1">
    <location>
        <begin position="17"/>
        <end position="634"/>
    </location>
</feature>
<feature type="domain" description="Follistatin-like">
    <location>
        <begin position="402"/>
        <end position="424"/>
    </location>
</feature>
<feature type="domain" description="Kazal-like" evidence="4">
    <location>
        <begin position="420"/>
        <end position="481"/>
    </location>
</feature>
<feature type="domain" description="EF-hand" evidence="3">
    <location>
        <begin position="592"/>
        <end position="627"/>
    </location>
</feature>
<feature type="region of interest" description="Disordered" evidence="5">
    <location>
        <begin position="50"/>
        <end position="335"/>
    </location>
</feature>
<feature type="region of interest" description="Disordered" evidence="5">
    <location>
        <begin position="360"/>
        <end position="398"/>
    </location>
</feature>
<feature type="compositionally biased region" description="Basic and acidic residues" evidence="5">
    <location>
        <begin position="51"/>
        <end position="62"/>
    </location>
</feature>
<feature type="compositionally biased region" description="Basic and acidic residues" evidence="5">
    <location>
        <begin position="73"/>
        <end position="83"/>
    </location>
</feature>
<feature type="compositionally biased region" description="Acidic residues" evidence="5">
    <location>
        <begin position="89"/>
        <end position="99"/>
    </location>
</feature>
<feature type="compositionally biased region" description="Polar residues" evidence="5">
    <location>
        <begin position="131"/>
        <end position="144"/>
    </location>
</feature>
<feature type="compositionally biased region" description="Acidic residues" evidence="5">
    <location>
        <begin position="189"/>
        <end position="198"/>
    </location>
</feature>
<feature type="compositionally biased region" description="Acidic residues" evidence="5">
    <location>
        <begin position="205"/>
        <end position="214"/>
    </location>
</feature>
<feature type="compositionally biased region" description="Polar residues" evidence="5">
    <location>
        <begin position="233"/>
        <end position="258"/>
    </location>
</feature>
<feature type="compositionally biased region" description="Basic and acidic residues" evidence="5">
    <location>
        <begin position="263"/>
        <end position="276"/>
    </location>
</feature>
<feature type="compositionally biased region" description="Basic and acidic residues" evidence="5">
    <location>
        <begin position="292"/>
        <end position="303"/>
    </location>
</feature>
<feature type="compositionally biased region" description="Basic and acidic residues" evidence="5">
    <location>
        <begin position="366"/>
        <end position="382"/>
    </location>
</feature>
<feature type="binding site" evidence="3">
    <location>
        <position position="605"/>
    </location>
    <ligand>
        <name>Ca(2+)</name>
        <dbReference type="ChEBI" id="CHEBI:29108"/>
    </ligand>
</feature>
<feature type="binding site" evidence="3">
    <location>
        <position position="607"/>
    </location>
    <ligand>
        <name>Ca(2+)</name>
        <dbReference type="ChEBI" id="CHEBI:29108"/>
    </ligand>
</feature>
<feature type="binding site" evidence="3">
    <location>
        <position position="609"/>
    </location>
    <ligand>
        <name>Ca(2+)</name>
        <dbReference type="ChEBI" id="CHEBI:29108"/>
    </ligand>
</feature>
<feature type="binding site" evidence="3">
    <location>
        <position position="611"/>
    </location>
    <ligand>
        <name>Ca(2+)</name>
        <dbReference type="ChEBI" id="CHEBI:29108"/>
    </ligand>
</feature>
<feature type="binding site" evidence="3">
    <location>
        <position position="616"/>
    </location>
    <ligand>
        <name>Ca(2+)</name>
        <dbReference type="ChEBI" id="CHEBI:29108"/>
    </ligand>
</feature>
<feature type="modified residue" description="Phosphoserine" evidence="7">
    <location>
        <position position="68"/>
    </location>
</feature>
<feature type="modified residue" description="Phosphoserine" evidence="7">
    <location>
        <position position="76"/>
    </location>
</feature>
<feature type="modified residue" description="Phosphoserine" evidence="7">
    <location>
        <position position="84"/>
    </location>
</feature>
<feature type="modified residue" description="Phosphoserine" evidence="7">
    <location>
        <position position="151"/>
    </location>
</feature>
<feature type="modified residue" description="Phosphoserine" evidence="7">
    <location>
        <position position="159"/>
    </location>
</feature>
<feature type="modified residue" description="Phosphoserine" evidence="7">
    <location>
        <position position="259"/>
    </location>
</feature>
<feature type="modified residue" description="Phosphoserine" evidence="7">
    <location>
        <position position="333"/>
    </location>
</feature>
<feature type="modified residue" description="Phosphoserine" evidence="7">
    <location>
        <position position="340"/>
    </location>
</feature>
<feature type="modified residue" description="Phosphoserine" evidence="7">
    <location>
        <position position="370"/>
    </location>
</feature>
<feature type="modified residue" description="Phosphoserine" evidence="1">
    <location>
        <position position="390"/>
    </location>
</feature>
<feature type="glycosylation site" description="N-linked (GlcNAc...) asparagine" evidence="2">
    <location>
        <position position="144"/>
    </location>
</feature>
<feature type="glycosylation site" description="N-linked (GlcNAc...) asparagine" evidence="2">
    <location>
        <position position="368"/>
    </location>
</feature>
<feature type="glycosylation site" description="N-linked (GlcNAc...) asparagine" evidence="2">
    <location>
        <position position="446"/>
    </location>
</feature>
<feature type="disulfide bond" evidence="4">
    <location>
        <begin position="403"/>
        <end position="414"/>
    </location>
</feature>
<feature type="disulfide bond" evidence="4">
    <location>
        <begin position="408"/>
        <end position="424"/>
    </location>
</feature>
<feature type="disulfide bond" evidence="4">
    <location>
        <begin position="426"/>
        <end position="460"/>
    </location>
</feature>
<feature type="disulfide bond" evidence="4">
    <location>
        <begin position="432"/>
        <end position="453"/>
    </location>
</feature>
<feature type="disulfide bond" evidence="4">
    <location>
        <begin position="442"/>
        <end position="479"/>
    </location>
</feature>
<feature type="disulfide bond" evidence="4">
    <location>
        <begin position="485"/>
        <end position="596"/>
    </location>
</feature>
<feature type="disulfide bond" evidence="4">
    <location>
        <begin position="604"/>
        <end position="620"/>
    </location>
</feature>